<proteinExistence type="inferred from homology"/>
<feature type="chain" id="PRO_1000071414" description="tRNA uridine 5-carboxymethylaminomethyl modification enzyme MnmG">
    <location>
        <begin position="1"/>
        <end position="630"/>
    </location>
</feature>
<feature type="binding site" evidence="1">
    <location>
        <begin position="14"/>
        <end position="19"/>
    </location>
    <ligand>
        <name>FAD</name>
        <dbReference type="ChEBI" id="CHEBI:57692"/>
    </ligand>
</feature>
<feature type="binding site" evidence="1">
    <location>
        <position position="126"/>
    </location>
    <ligand>
        <name>FAD</name>
        <dbReference type="ChEBI" id="CHEBI:57692"/>
    </ligand>
</feature>
<feature type="binding site" evidence="1">
    <location>
        <position position="181"/>
    </location>
    <ligand>
        <name>FAD</name>
        <dbReference type="ChEBI" id="CHEBI:57692"/>
    </ligand>
</feature>
<feature type="binding site" evidence="1">
    <location>
        <begin position="273"/>
        <end position="287"/>
    </location>
    <ligand>
        <name>NAD(+)</name>
        <dbReference type="ChEBI" id="CHEBI:57540"/>
    </ligand>
</feature>
<feature type="binding site" evidence="1">
    <location>
        <position position="370"/>
    </location>
    <ligand>
        <name>FAD</name>
        <dbReference type="ChEBI" id="CHEBI:57692"/>
    </ligand>
</feature>
<dbReference type="EMBL" id="CP000612">
    <property type="protein sequence ID" value="ABO51823.1"/>
    <property type="molecule type" value="Genomic_DNA"/>
</dbReference>
<dbReference type="RefSeq" id="WP_011879608.1">
    <property type="nucleotide sequence ID" value="NC_009253.1"/>
</dbReference>
<dbReference type="SMR" id="A4J9S0"/>
<dbReference type="STRING" id="349161.Dred_3323"/>
<dbReference type="KEGG" id="drm:Dred_3323"/>
<dbReference type="eggNOG" id="COG0445">
    <property type="taxonomic scope" value="Bacteria"/>
</dbReference>
<dbReference type="HOGENOM" id="CLU_007831_2_2_9"/>
<dbReference type="OrthoDB" id="9815560at2"/>
<dbReference type="Proteomes" id="UP000001556">
    <property type="component" value="Chromosome"/>
</dbReference>
<dbReference type="GO" id="GO:0005829">
    <property type="term" value="C:cytosol"/>
    <property type="evidence" value="ECO:0007669"/>
    <property type="project" value="TreeGrafter"/>
</dbReference>
<dbReference type="GO" id="GO:0050660">
    <property type="term" value="F:flavin adenine dinucleotide binding"/>
    <property type="evidence" value="ECO:0007669"/>
    <property type="project" value="UniProtKB-UniRule"/>
</dbReference>
<dbReference type="GO" id="GO:0030488">
    <property type="term" value="P:tRNA methylation"/>
    <property type="evidence" value="ECO:0007669"/>
    <property type="project" value="TreeGrafter"/>
</dbReference>
<dbReference type="GO" id="GO:0002098">
    <property type="term" value="P:tRNA wobble uridine modification"/>
    <property type="evidence" value="ECO:0007669"/>
    <property type="project" value="InterPro"/>
</dbReference>
<dbReference type="FunFam" id="1.10.10.1800:FF:000001">
    <property type="entry name" value="tRNA uridine 5-carboxymethylaminomethyl modification enzyme MnmG"/>
    <property type="match status" value="1"/>
</dbReference>
<dbReference type="FunFam" id="1.10.150.570:FF:000001">
    <property type="entry name" value="tRNA uridine 5-carboxymethylaminomethyl modification enzyme MnmG"/>
    <property type="match status" value="1"/>
</dbReference>
<dbReference type="FunFam" id="3.50.50.60:FF:000002">
    <property type="entry name" value="tRNA uridine 5-carboxymethylaminomethyl modification enzyme MnmG"/>
    <property type="match status" value="1"/>
</dbReference>
<dbReference type="FunFam" id="3.50.50.60:FF:000063">
    <property type="entry name" value="tRNA uridine 5-carboxymethylaminomethyl modification enzyme MnmG"/>
    <property type="match status" value="1"/>
</dbReference>
<dbReference type="Gene3D" id="3.50.50.60">
    <property type="entry name" value="FAD/NAD(P)-binding domain"/>
    <property type="match status" value="2"/>
</dbReference>
<dbReference type="Gene3D" id="1.10.150.570">
    <property type="entry name" value="GidA associated domain, C-terminal subdomain"/>
    <property type="match status" value="1"/>
</dbReference>
<dbReference type="Gene3D" id="1.10.10.1800">
    <property type="entry name" value="tRNA uridine 5-carboxymethylaminomethyl modification enzyme MnmG/GidA"/>
    <property type="match status" value="1"/>
</dbReference>
<dbReference type="HAMAP" id="MF_00129">
    <property type="entry name" value="MnmG_GidA"/>
    <property type="match status" value="1"/>
</dbReference>
<dbReference type="InterPro" id="IPR036188">
    <property type="entry name" value="FAD/NAD-bd_sf"/>
</dbReference>
<dbReference type="InterPro" id="IPR049312">
    <property type="entry name" value="GIDA_C_N"/>
</dbReference>
<dbReference type="InterPro" id="IPR004416">
    <property type="entry name" value="MnmG"/>
</dbReference>
<dbReference type="InterPro" id="IPR002218">
    <property type="entry name" value="MnmG-rel"/>
</dbReference>
<dbReference type="InterPro" id="IPR020595">
    <property type="entry name" value="MnmG-rel_CS"/>
</dbReference>
<dbReference type="InterPro" id="IPR026904">
    <property type="entry name" value="MnmG_C"/>
</dbReference>
<dbReference type="InterPro" id="IPR047001">
    <property type="entry name" value="MnmG_C_subdom"/>
</dbReference>
<dbReference type="InterPro" id="IPR044920">
    <property type="entry name" value="MnmG_C_subdom_sf"/>
</dbReference>
<dbReference type="InterPro" id="IPR040131">
    <property type="entry name" value="MnmG_N"/>
</dbReference>
<dbReference type="NCBIfam" id="TIGR00136">
    <property type="entry name" value="mnmG_gidA"/>
    <property type="match status" value="1"/>
</dbReference>
<dbReference type="PANTHER" id="PTHR11806">
    <property type="entry name" value="GLUCOSE INHIBITED DIVISION PROTEIN A"/>
    <property type="match status" value="1"/>
</dbReference>
<dbReference type="PANTHER" id="PTHR11806:SF0">
    <property type="entry name" value="PROTEIN MTO1 HOMOLOG, MITOCHONDRIAL"/>
    <property type="match status" value="1"/>
</dbReference>
<dbReference type="Pfam" id="PF01134">
    <property type="entry name" value="GIDA"/>
    <property type="match status" value="1"/>
</dbReference>
<dbReference type="Pfam" id="PF21680">
    <property type="entry name" value="GIDA_C_1st"/>
    <property type="match status" value="1"/>
</dbReference>
<dbReference type="Pfam" id="PF13932">
    <property type="entry name" value="SAM_GIDA_C"/>
    <property type="match status" value="1"/>
</dbReference>
<dbReference type="PRINTS" id="PR00411">
    <property type="entry name" value="PNDRDTASEI"/>
</dbReference>
<dbReference type="SMART" id="SM01228">
    <property type="entry name" value="GIDA_assoc_3"/>
    <property type="match status" value="1"/>
</dbReference>
<dbReference type="SUPFAM" id="SSF51905">
    <property type="entry name" value="FAD/NAD(P)-binding domain"/>
    <property type="match status" value="1"/>
</dbReference>
<dbReference type="PROSITE" id="PS01280">
    <property type="entry name" value="GIDA_1"/>
    <property type="match status" value="1"/>
</dbReference>
<dbReference type="PROSITE" id="PS01281">
    <property type="entry name" value="GIDA_2"/>
    <property type="match status" value="1"/>
</dbReference>
<keyword id="KW-0963">Cytoplasm</keyword>
<keyword id="KW-0274">FAD</keyword>
<keyword id="KW-0285">Flavoprotein</keyword>
<keyword id="KW-0520">NAD</keyword>
<keyword id="KW-1185">Reference proteome</keyword>
<keyword id="KW-0819">tRNA processing</keyword>
<evidence type="ECO:0000255" key="1">
    <source>
        <dbReference type="HAMAP-Rule" id="MF_00129"/>
    </source>
</evidence>
<accession>A4J9S0</accession>
<sequence length="630" mass="70451">MRYHAGDYDVIIVGAGHAGCEAGLAAARMGCKTLVLTLNLDNIALMPCNPAVGGPAKSHLVKEIDALGGQMGLTTDLAAIQMRMLNTGKGPAVYALRAQADKVKYQQLMKKNLETQENLDVKQLLVEEILVKNGRVTGVATQIGAEFSARAVVVTTGTYLKGRIIIGNVHFPGGPNSQFPSVNLSENLRSLGLELGRFKTGTPARVDRRTIDFTKMTIQPGDEEVHNFSYISPVTQREQVPCWLTYTTEKTHEIIRENLHRSPLYSGIIEGVGPRYCPSIEDKIVRFADKPQHQIFVEPEGLHTYEMYVQGMSTSLPPDVQLKMYRTIPGMENVSIMRPAYAIEYDYIVPTQLRTTLETKEIIGLYAAGQINGTSGYEEAAAQGIMAGINAALQVQEKDPFYLSRSEAYIGVLIDDLVVKGTNEPYRLMTARAEYRLLLRQDNADHRLTQKGYNIGLVSQVRYDHYMNKWQSISKEMERLKTIVIPANEETNKVLKSLESSEITQNTPFINLLRRPEIKYNTLAGLSDHFLDLPQEVIEEVEIEVKYEGYIKKQLAQVERFEKLEGRILNIDIDYEMIKGLSLEARQKLKKFKPTSIGQASRISGVSPADISVLLIWLEQERRKIAGGDA</sequence>
<gene>
    <name evidence="1" type="primary">mnmG</name>
    <name evidence="1" type="synonym">gidA</name>
    <name type="ordered locus">Dred_3323</name>
</gene>
<reference key="1">
    <citation type="submission" date="2007-03" db="EMBL/GenBank/DDBJ databases">
        <title>Complete sequence of Desulfotomaculum reducens MI-1.</title>
        <authorList>
            <consortium name="US DOE Joint Genome Institute"/>
            <person name="Copeland A."/>
            <person name="Lucas S."/>
            <person name="Lapidus A."/>
            <person name="Barry K."/>
            <person name="Detter J.C."/>
            <person name="Glavina del Rio T."/>
            <person name="Hammon N."/>
            <person name="Israni S."/>
            <person name="Dalin E."/>
            <person name="Tice H."/>
            <person name="Pitluck S."/>
            <person name="Sims D."/>
            <person name="Brettin T."/>
            <person name="Bruce D."/>
            <person name="Han C."/>
            <person name="Tapia R."/>
            <person name="Schmutz J."/>
            <person name="Larimer F."/>
            <person name="Land M."/>
            <person name="Hauser L."/>
            <person name="Kyrpides N."/>
            <person name="Kim E."/>
            <person name="Tebo B.M."/>
            <person name="Richardson P."/>
        </authorList>
    </citation>
    <scope>NUCLEOTIDE SEQUENCE [LARGE SCALE GENOMIC DNA]</scope>
    <source>
        <strain>ATCC BAA-1160 / DSM 100696 / MI-1</strain>
    </source>
</reference>
<organism>
    <name type="scientific">Desulforamulus reducens (strain ATCC BAA-1160 / DSM 100696 / MI-1)</name>
    <name type="common">Desulfotomaculum reducens</name>
    <dbReference type="NCBI Taxonomy" id="349161"/>
    <lineage>
        <taxon>Bacteria</taxon>
        <taxon>Bacillati</taxon>
        <taxon>Bacillota</taxon>
        <taxon>Clostridia</taxon>
        <taxon>Eubacteriales</taxon>
        <taxon>Peptococcaceae</taxon>
        <taxon>Desulforamulus</taxon>
    </lineage>
</organism>
<protein>
    <recommendedName>
        <fullName evidence="1">tRNA uridine 5-carboxymethylaminomethyl modification enzyme MnmG</fullName>
    </recommendedName>
    <alternativeName>
        <fullName evidence="1">Glucose-inhibited division protein A</fullName>
    </alternativeName>
</protein>
<name>MNMG_DESRM</name>
<comment type="function">
    <text evidence="1">NAD-binding protein involved in the addition of a carboxymethylaminomethyl (cmnm) group at the wobble position (U34) of certain tRNAs, forming tRNA-cmnm(5)s(2)U34.</text>
</comment>
<comment type="cofactor">
    <cofactor evidence="1">
        <name>FAD</name>
        <dbReference type="ChEBI" id="CHEBI:57692"/>
    </cofactor>
</comment>
<comment type="subunit">
    <text evidence="1">Homodimer. Heterotetramer of two MnmE and two MnmG subunits.</text>
</comment>
<comment type="subcellular location">
    <subcellularLocation>
        <location evidence="1">Cytoplasm</location>
    </subcellularLocation>
</comment>
<comment type="similarity">
    <text evidence="1">Belongs to the MnmG family.</text>
</comment>